<evidence type="ECO:0000250" key="1"/>
<evidence type="ECO:0000250" key="2">
    <source>
        <dbReference type="UniProtKB" id="P02668"/>
    </source>
</evidence>
<evidence type="ECO:0000250" key="3">
    <source>
        <dbReference type="UniProtKB" id="P02670"/>
    </source>
</evidence>
<evidence type="ECO:0000305" key="4"/>
<keyword id="KW-0325">Glycoprotein</keyword>
<keyword id="KW-0494">Milk protein</keyword>
<keyword id="KW-0597">Phosphoprotein</keyword>
<keyword id="KW-0964">Secreted</keyword>
<keyword id="KW-0732">Signal</keyword>
<protein>
    <recommendedName>
        <fullName>Kappa-casein</fullName>
    </recommendedName>
</protein>
<dbReference type="EMBL" id="D32188">
    <property type="protein sequence ID" value="BAA06887.1"/>
    <property type="molecule type" value="Genomic_DNA"/>
</dbReference>
<dbReference type="GlyCosmos" id="P50425">
    <property type="glycosylation" value="7 sites, No reported glycans"/>
</dbReference>
<dbReference type="GO" id="GO:0005615">
    <property type="term" value="C:extracellular space"/>
    <property type="evidence" value="ECO:0007669"/>
    <property type="project" value="TreeGrafter"/>
</dbReference>
<dbReference type="GO" id="GO:0007595">
    <property type="term" value="P:lactation"/>
    <property type="evidence" value="ECO:0007669"/>
    <property type="project" value="TreeGrafter"/>
</dbReference>
<dbReference type="GO" id="GO:0050821">
    <property type="term" value="P:protein stabilization"/>
    <property type="evidence" value="ECO:0007669"/>
    <property type="project" value="TreeGrafter"/>
</dbReference>
<dbReference type="InterPro" id="IPR000117">
    <property type="entry name" value="Casein_kappa"/>
</dbReference>
<dbReference type="PANTHER" id="PTHR11470">
    <property type="entry name" value="KAPPA CASEIN"/>
    <property type="match status" value="1"/>
</dbReference>
<dbReference type="PANTHER" id="PTHR11470:SF2">
    <property type="entry name" value="KAPPA-CASEIN"/>
    <property type="match status" value="1"/>
</dbReference>
<dbReference type="Pfam" id="PF00997">
    <property type="entry name" value="Casein_kappa"/>
    <property type="match status" value="1"/>
</dbReference>
<dbReference type="PIRSF" id="PIRSF002374">
    <property type="entry name" value="Casein_kappa"/>
    <property type="match status" value="1"/>
</dbReference>
<proteinExistence type="evidence at transcript level"/>
<gene>
    <name type="primary">CSN3</name>
    <name type="synonym">CSN10</name>
    <name type="synonym">CSNK</name>
</gene>
<accession>P50425</accession>
<sequence>MMKSFFLVVTILALTLPFLDAQERNQEQPICCEKDERFFNDRIAKYIPIQYVLSRYPSYGLNYYQQRPVALINNQFLPYPYYAKPVAVRSPAQTLQWQVLPNTVPAKSCQDQPTTMARHPHPHLSFMAIPPKKDQDKTEIPTINTVASAEPASTPTTEAIVNTEAIVNTEAIVNTVDNPEASSEIIASVPETNTAQVTSTEV</sequence>
<organism>
    <name type="scientific">Saiga tatarica</name>
    <name type="common">Saiga antelope</name>
    <dbReference type="NCBI Taxonomy" id="34875"/>
    <lineage>
        <taxon>Eukaryota</taxon>
        <taxon>Metazoa</taxon>
        <taxon>Chordata</taxon>
        <taxon>Craniata</taxon>
        <taxon>Vertebrata</taxon>
        <taxon>Euteleostomi</taxon>
        <taxon>Mammalia</taxon>
        <taxon>Eutheria</taxon>
        <taxon>Laurasiatheria</taxon>
        <taxon>Artiodactyla</taxon>
        <taxon>Ruminantia</taxon>
        <taxon>Pecora</taxon>
        <taxon>Bovidae</taxon>
        <taxon>Antilopinae</taxon>
        <taxon>Saiga</taxon>
    </lineage>
</organism>
<name>CASK_SAITA</name>
<reference key="1">
    <citation type="journal article" date="1995" name="J. Mol. Evol.">
        <title>Molecular phylogeny based on the kappa-casein and cytochrome b sequences in the mammalian suborder ruminantia.</title>
        <authorList>
            <person name="Chikuni K."/>
            <person name="Mori Y."/>
            <person name="Tabata T."/>
            <person name="Saito M."/>
            <person name="Monma M."/>
            <person name="Kosugiyama M."/>
        </authorList>
    </citation>
    <scope>NUCLEOTIDE SEQUENCE [GENOMIC DNA]</scope>
</reference>
<comment type="function">
    <text>Kappa-casein stabilizes micelle formation, preventing casein precipitation in milk.</text>
</comment>
<comment type="subcellular location">
    <subcellularLocation>
        <location>Secreted</location>
    </subcellularLocation>
</comment>
<comment type="tissue specificity">
    <text>Mammary gland specific. Secreted in milk.</text>
</comment>
<comment type="similarity">
    <text evidence="4">Belongs to the kappa-casein family.</text>
</comment>
<feature type="signal peptide" evidence="1">
    <location>
        <begin position="1"/>
        <end position="21"/>
    </location>
</feature>
<feature type="chain" id="PRO_0000004506" description="Kappa-casein">
    <location>
        <begin position="22"/>
        <end position="202"/>
    </location>
</feature>
<feature type="site" description="Cleavage; by chymosin/rennin" evidence="1">
    <location>
        <begin position="126"/>
        <end position="127"/>
    </location>
</feature>
<feature type="modified residue" description="Phosphoserine" evidence="2">
    <location>
        <position position="148"/>
    </location>
</feature>
<feature type="modified residue" description="Phosphoserine; alternate" evidence="2">
    <location>
        <position position="182"/>
    </location>
</feature>
<feature type="modified residue" description="Phosphoserine" evidence="3">
    <location>
        <position position="199"/>
    </location>
</feature>
<feature type="glycosylation site" description="O-linked (GalNAc...) threonine" evidence="2">
    <location>
        <position position="142"/>
    </location>
</feature>
<feature type="glycosylation site" description="O-linked (GalNAc...) serine" evidence="2">
    <location>
        <position position="153"/>
    </location>
</feature>
<feature type="glycosylation site" description="O-linked (GalNAc...) threonine" evidence="2">
    <location>
        <position position="154"/>
    </location>
</feature>
<feature type="glycosylation site" description="O-linked (GalNAc...) threonine" evidence="2">
    <location>
        <position position="169"/>
    </location>
</feature>
<feature type="glycosylation site" description="O-linked (GalNAc...) threonine" evidence="2">
    <location>
        <position position="175"/>
    </location>
</feature>
<feature type="glycosylation site" description="O-linked (GalNAc...) serine; alternate" evidence="2">
    <location>
        <position position="182"/>
    </location>
</feature>
<feature type="glycosylation site" description="O-linked (GalNAc...) threonine" evidence="2">
    <location>
        <position position="198"/>
    </location>
</feature>